<accession>Q58497</accession>
<organism>
    <name type="scientific">Methanocaldococcus jannaschii (strain ATCC 43067 / DSM 2661 / JAL-1 / JCM 10045 / NBRC 100440)</name>
    <name type="common">Methanococcus jannaschii</name>
    <dbReference type="NCBI Taxonomy" id="243232"/>
    <lineage>
        <taxon>Archaea</taxon>
        <taxon>Methanobacteriati</taxon>
        <taxon>Methanobacteriota</taxon>
        <taxon>Methanomada group</taxon>
        <taxon>Methanococci</taxon>
        <taxon>Methanococcales</taxon>
        <taxon>Methanocaldococcaceae</taxon>
        <taxon>Methanocaldococcus</taxon>
    </lineage>
</organism>
<sequence length="438" mass="48900">MKIMFLGNDTVEIKDGRFFIDGYDAIELAEKFGTPLYVMSEEQIKINYNRYIEAFKRWEEETGKEFIVAYAYKANANLAITRLLAKLGCGADVVSGGELYIAKLSNVPSKKIVFNGNCKTKEEIIMGIEANIRAFNVDSISELILINETAKELGETANVAFRINPNVNPKTHPKISTGLKKNKFGLDVESGIAMKAIKMALEMEYVNVVGVHCHIGSQLTDISPFIEETRKVMDFVVELKEEGIEIEDVNLGGGLGIPYYKDKQIPTQKDLADAIINTMLKYKDKVEMPNLILEPGRSLVATAGYLLGKVHHIKETPVTKWVMIDAGMNDMMRPAMYEAYHHIINCKVKNEKEVVSIAGGLCESSDVFGRDRELDKVEVGDVLAIFDVGAYGISMANNYNARGRPRMVLTSKKGVFLIRERETYADLIAKDIVPPHLL</sequence>
<name>DCDA_METJA</name>
<dbReference type="EC" id="4.1.1.20" evidence="1 2"/>
<dbReference type="EMBL" id="L77117">
    <property type="protein sequence ID" value="AAB99100.1"/>
    <property type="molecule type" value="Genomic_DNA"/>
</dbReference>
<dbReference type="PIR" id="H64436">
    <property type="entry name" value="H64436"/>
</dbReference>
<dbReference type="PDB" id="1TUF">
    <property type="method" value="X-ray"/>
    <property type="resolution" value="2.40 A"/>
    <property type="chains" value="A/B=5-438"/>
</dbReference>
<dbReference type="PDB" id="1TWI">
    <property type="method" value="X-ray"/>
    <property type="resolution" value="2.00 A"/>
    <property type="chains" value="A/B/C/D=6-438"/>
</dbReference>
<dbReference type="PDBsum" id="1TUF"/>
<dbReference type="PDBsum" id="1TWI"/>
<dbReference type="SMR" id="Q58497"/>
<dbReference type="FunCoup" id="Q58497">
    <property type="interactions" value="145"/>
</dbReference>
<dbReference type="STRING" id="243232.MJ_1097"/>
<dbReference type="PaxDb" id="243232-MJ_1097"/>
<dbReference type="EnsemblBacteria" id="AAB99100">
    <property type="protein sequence ID" value="AAB99100"/>
    <property type="gene ID" value="MJ_1097"/>
</dbReference>
<dbReference type="KEGG" id="mja:MJ_1097"/>
<dbReference type="eggNOG" id="arCOG02268">
    <property type="taxonomic scope" value="Archaea"/>
</dbReference>
<dbReference type="HOGENOM" id="CLU_026444_0_1_2"/>
<dbReference type="InParanoid" id="Q58497"/>
<dbReference type="PhylomeDB" id="Q58497"/>
<dbReference type="SABIO-RK" id="Q58497"/>
<dbReference type="UniPathway" id="UPA00034">
    <property type="reaction ID" value="UER00027"/>
</dbReference>
<dbReference type="EvolutionaryTrace" id="Q58497"/>
<dbReference type="Proteomes" id="UP000000805">
    <property type="component" value="Chromosome"/>
</dbReference>
<dbReference type="GO" id="GO:0008836">
    <property type="term" value="F:diaminopimelate decarboxylase activity"/>
    <property type="evidence" value="ECO:0000318"/>
    <property type="project" value="GO_Central"/>
</dbReference>
<dbReference type="GO" id="GO:0030170">
    <property type="term" value="F:pyridoxal phosphate binding"/>
    <property type="evidence" value="ECO:0007669"/>
    <property type="project" value="UniProtKB-UniRule"/>
</dbReference>
<dbReference type="GO" id="GO:0009089">
    <property type="term" value="P:lysine biosynthetic process via diaminopimelate"/>
    <property type="evidence" value="ECO:0000318"/>
    <property type="project" value="GO_Central"/>
</dbReference>
<dbReference type="CDD" id="cd06828">
    <property type="entry name" value="PLPDE_III_DapDC"/>
    <property type="match status" value="1"/>
</dbReference>
<dbReference type="FunFam" id="2.40.37.10:FF:000003">
    <property type="entry name" value="Diaminopimelate decarboxylase"/>
    <property type="match status" value="1"/>
</dbReference>
<dbReference type="FunFam" id="3.20.20.10:FF:000003">
    <property type="entry name" value="Diaminopimelate decarboxylase"/>
    <property type="match status" value="1"/>
</dbReference>
<dbReference type="Gene3D" id="3.20.20.10">
    <property type="entry name" value="Alanine racemase"/>
    <property type="match status" value="1"/>
</dbReference>
<dbReference type="Gene3D" id="2.40.37.10">
    <property type="entry name" value="Lyase, Ornithine Decarboxylase, Chain A, domain 1"/>
    <property type="match status" value="1"/>
</dbReference>
<dbReference type="HAMAP" id="MF_02120">
    <property type="entry name" value="LysA"/>
    <property type="match status" value="1"/>
</dbReference>
<dbReference type="InterPro" id="IPR009006">
    <property type="entry name" value="Ala_racemase/Decarboxylase_C"/>
</dbReference>
<dbReference type="InterPro" id="IPR002986">
    <property type="entry name" value="DAP_deCOOHase_LysA"/>
</dbReference>
<dbReference type="InterPro" id="IPR022643">
    <property type="entry name" value="De-COase2_C"/>
</dbReference>
<dbReference type="InterPro" id="IPR022657">
    <property type="entry name" value="De-COase2_CS"/>
</dbReference>
<dbReference type="InterPro" id="IPR022644">
    <property type="entry name" value="De-COase2_N"/>
</dbReference>
<dbReference type="InterPro" id="IPR022653">
    <property type="entry name" value="De-COase2_pyr-phos_BS"/>
</dbReference>
<dbReference type="InterPro" id="IPR000183">
    <property type="entry name" value="Orn/DAP/Arg_de-COase"/>
</dbReference>
<dbReference type="InterPro" id="IPR029066">
    <property type="entry name" value="PLP-binding_barrel"/>
</dbReference>
<dbReference type="NCBIfam" id="TIGR01048">
    <property type="entry name" value="lysA"/>
    <property type="match status" value="1"/>
</dbReference>
<dbReference type="PANTHER" id="PTHR43727">
    <property type="entry name" value="DIAMINOPIMELATE DECARBOXYLASE"/>
    <property type="match status" value="1"/>
</dbReference>
<dbReference type="PANTHER" id="PTHR43727:SF2">
    <property type="entry name" value="GROUP IV DECARBOXYLASE"/>
    <property type="match status" value="1"/>
</dbReference>
<dbReference type="Pfam" id="PF02784">
    <property type="entry name" value="Orn_Arg_deC_N"/>
    <property type="match status" value="1"/>
</dbReference>
<dbReference type="Pfam" id="PF00278">
    <property type="entry name" value="Orn_DAP_Arg_deC"/>
    <property type="match status" value="1"/>
</dbReference>
<dbReference type="PRINTS" id="PR01181">
    <property type="entry name" value="DAPDCRBXLASE"/>
</dbReference>
<dbReference type="PRINTS" id="PR01179">
    <property type="entry name" value="ODADCRBXLASE"/>
</dbReference>
<dbReference type="SUPFAM" id="SSF50621">
    <property type="entry name" value="Alanine racemase C-terminal domain-like"/>
    <property type="match status" value="2"/>
</dbReference>
<dbReference type="SUPFAM" id="SSF51419">
    <property type="entry name" value="PLP-binding barrel"/>
    <property type="match status" value="1"/>
</dbReference>
<dbReference type="PROSITE" id="PS00878">
    <property type="entry name" value="ODR_DC_2_1"/>
    <property type="match status" value="1"/>
</dbReference>
<dbReference type="PROSITE" id="PS00879">
    <property type="entry name" value="ODR_DC_2_2"/>
    <property type="match status" value="1"/>
</dbReference>
<gene>
    <name evidence="1" type="primary">lysA</name>
    <name type="ordered locus">MJ1097</name>
</gene>
<proteinExistence type="evidence at protein level"/>
<comment type="function">
    <text evidence="2">Specifically catalyzes the decarboxylation of meso-diaminopimelate (meso-DAP) to L-lysine.</text>
</comment>
<comment type="catalytic activity">
    <reaction evidence="2">
        <text>meso-2,6-diaminopimelate + H(+) = L-lysine + CO2</text>
        <dbReference type="Rhea" id="RHEA:15101"/>
        <dbReference type="ChEBI" id="CHEBI:15378"/>
        <dbReference type="ChEBI" id="CHEBI:16526"/>
        <dbReference type="ChEBI" id="CHEBI:32551"/>
        <dbReference type="ChEBI" id="CHEBI:57791"/>
        <dbReference type="EC" id="4.1.1.20"/>
    </reaction>
</comment>
<comment type="cofactor">
    <cofactor evidence="2">
        <name>pyridoxal 5'-phosphate</name>
        <dbReference type="ChEBI" id="CHEBI:597326"/>
    </cofactor>
</comment>
<comment type="activity regulation">
    <text evidence="2">Competitively inhibited by the substrate analog azelaic acid in vitro but not in vivo.</text>
</comment>
<comment type="biophysicochemical properties">
    <kinetics>
        <KM evidence="2">588 uM for meso-2,6-diaminoheptanedioate</KM>
    </kinetics>
</comment>
<comment type="pathway">
    <text evidence="1">Amino-acid biosynthesis; L-lysine biosynthesis via DAP pathway; L-lysine from DL-2,6-diaminopimelate: step 1/1.</text>
</comment>
<comment type="subunit">
    <text evidence="3">Homodimer.</text>
</comment>
<comment type="similarity">
    <text evidence="1">Belongs to the Orn/Lys/Arg decarboxylase class-II family. LysA subfamily.</text>
</comment>
<keyword id="KW-0002">3D-structure</keyword>
<keyword id="KW-0028">Amino-acid biosynthesis</keyword>
<keyword id="KW-0210">Decarboxylase</keyword>
<keyword id="KW-0456">Lyase</keyword>
<keyword id="KW-0457">Lysine biosynthesis</keyword>
<keyword id="KW-0663">Pyridoxal phosphate</keyword>
<keyword id="KW-1185">Reference proteome</keyword>
<evidence type="ECO:0000255" key="1">
    <source>
        <dbReference type="HAMAP-Rule" id="MF_02120"/>
    </source>
</evidence>
<evidence type="ECO:0000269" key="2">
    <source>
    </source>
</evidence>
<evidence type="ECO:0000305" key="3">
    <source>
    </source>
</evidence>
<evidence type="ECO:0007829" key="4">
    <source>
        <dbReference type="PDB" id="1TWI"/>
    </source>
</evidence>
<feature type="chain" id="PRO_0000149941" description="Diaminopimelate decarboxylase">
    <location>
        <begin position="1"/>
        <end position="438"/>
    </location>
</feature>
<feature type="active site" description="Proton donor" evidence="1">
    <location>
        <position position="362"/>
    </location>
</feature>
<feature type="binding site" evidence="2">
    <location>
        <position position="217"/>
    </location>
    <ligand>
        <name>pyridoxal 5'-phosphate</name>
        <dbReference type="ChEBI" id="CHEBI:597326"/>
    </ligand>
</feature>
<feature type="binding site" evidence="2">
    <location>
        <position position="254"/>
    </location>
    <ligand>
        <name>pyridoxal 5'-phosphate</name>
        <dbReference type="ChEBI" id="CHEBI:597326"/>
    </ligand>
</feature>
<feature type="binding site" evidence="1 2">
    <location>
        <begin position="294"/>
        <end position="297"/>
    </location>
    <ligand>
        <name>pyridoxal 5'-phosphate</name>
        <dbReference type="ChEBI" id="CHEBI:597326"/>
    </ligand>
</feature>
<feature type="binding site" evidence="3">
    <location>
        <position position="297"/>
    </location>
    <ligand>
        <name>substrate</name>
    </ligand>
</feature>
<feature type="binding site" evidence="3">
    <location>
        <position position="333"/>
    </location>
    <ligand>
        <name>substrate</name>
    </ligand>
</feature>
<feature type="binding site" evidence="3">
    <location>
        <position position="337"/>
    </location>
    <ligand>
        <name>substrate</name>
    </ligand>
</feature>
<feature type="binding site" evidence="3">
    <location>
        <position position="363"/>
    </location>
    <ligand>
        <name>substrate</name>
    </ligand>
</feature>
<feature type="binding site" evidence="2">
    <location>
        <position position="391"/>
    </location>
    <ligand>
        <name>pyridoxal 5'-phosphate</name>
        <dbReference type="ChEBI" id="CHEBI:597326"/>
    </ligand>
</feature>
<feature type="binding site" evidence="1">
    <location>
        <position position="391"/>
    </location>
    <ligand>
        <name>substrate</name>
    </ligand>
</feature>
<feature type="modified residue" description="N6-(pyridoxal phosphate)lysine" evidence="2">
    <location>
        <position position="73"/>
    </location>
</feature>
<feature type="strand" evidence="4">
    <location>
        <begin position="11"/>
        <end position="14"/>
    </location>
</feature>
<feature type="strand" evidence="4">
    <location>
        <begin position="17"/>
        <end position="20"/>
    </location>
</feature>
<feature type="helix" evidence="4">
    <location>
        <begin position="25"/>
        <end position="32"/>
    </location>
</feature>
<feature type="strand" evidence="4">
    <location>
        <begin position="34"/>
        <end position="40"/>
    </location>
</feature>
<feature type="helix" evidence="4">
    <location>
        <begin position="41"/>
        <end position="62"/>
    </location>
</feature>
<feature type="strand" evidence="4">
    <location>
        <begin position="66"/>
        <end position="71"/>
    </location>
</feature>
<feature type="helix" evidence="4">
    <location>
        <begin position="72"/>
        <end position="74"/>
    </location>
</feature>
<feature type="helix" evidence="4">
    <location>
        <begin position="78"/>
        <end position="86"/>
    </location>
</feature>
<feature type="strand" evidence="4">
    <location>
        <begin position="90"/>
        <end position="93"/>
    </location>
</feature>
<feature type="helix" evidence="4">
    <location>
        <begin position="96"/>
        <end position="104"/>
    </location>
</feature>
<feature type="helix" evidence="4">
    <location>
        <begin position="109"/>
        <end position="111"/>
    </location>
</feature>
<feature type="strand" evidence="4">
    <location>
        <begin position="112"/>
        <end position="114"/>
    </location>
</feature>
<feature type="helix" evidence="4">
    <location>
        <begin position="121"/>
        <end position="129"/>
    </location>
</feature>
<feature type="strand" evidence="4">
    <location>
        <begin position="133"/>
        <end position="137"/>
    </location>
</feature>
<feature type="helix" evidence="4">
    <location>
        <begin position="140"/>
        <end position="153"/>
    </location>
</feature>
<feature type="strand" evidence="4">
    <location>
        <begin position="157"/>
        <end position="164"/>
    </location>
</feature>
<feature type="turn" evidence="4">
    <location>
        <begin position="169"/>
        <end position="171"/>
    </location>
</feature>
<feature type="helix" evidence="4">
    <location>
        <begin position="173"/>
        <end position="181"/>
    </location>
</feature>
<feature type="strand" evidence="4">
    <location>
        <begin position="185"/>
        <end position="188"/>
    </location>
</feature>
<feature type="helix" evidence="4">
    <location>
        <begin position="192"/>
        <end position="202"/>
    </location>
</feature>
<feature type="strand" evidence="4">
    <location>
        <begin position="204"/>
        <end position="212"/>
    </location>
</feature>
<feature type="strand" evidence="4">
    <location>
        <begin position="217"/>
        <end position="219"/>
    </location>
</feature>
<feature type="helix" evidence="4">
    <location>
        <begin position="223"/>
        <end position="241"/>
    </location>
</feature>
<feature type="strand" evidence="4">
    <location>
        <begin position="247"/>
        <end position="250"/>
    </location>
</feature>
<feature type="strand" evidence="4">
    <location>
        <begin position="259"/>
        <end position="263"/>
    </location>
</feature>
<feature type="helix" evidence="4">
    <location>
        <begin position="268"/>
        <end position="280"/>
    </location>
</feature>
<feature type="turn" evidence="4">
    <location>
        <begin position="281"/>
        <end position="285"/>
    </location>
</feature>
<feature type="strand" evidence="4">
    <location>
        <begin position="290"/>
        <end position="293"/>
    </location>
</feature>
<feature type="helix" evidence="4">
    <location>
        <begin position="297"/>
        <end position="300"/>
    </location>
</feature>
<feature type="helix" evidence="4">
    <location>
        <begin position="301"/>
        <end position="303"/>
    </location>
</feature>
<feature type="strand" evidence="4">
    <location>
        <begin position="304"/>
        <end position="315"/>
    </location>
</feature>
<feature type="strand" evidence="4">
    <location>
        <begin position="320"/>
        <end position="325"/>
    </location>
</feature>
<feature type="turn" evidence="4">
    <location>
        <begin position="328"/>
        <end position="330"/>
    </location>
</feature>
<feature type="helix" evidence="4">
    <location>
        <begin position="333"/>
        <end position="337"/>
    </location>
</feature>
<feature type="strand" evidence="4">
    <location>
        <begin position="343"/>
        <end position="347"/>
    </location>
</feature>
<feature type="strand" evidence="4">
    <location>
        <begin position="352"/>
        <end position="358"/>
    </location>
</feature>
<feature type="strand" evidence="4">
    <location>
        <begin position="360"/>
        <end position="362"/>
    </location>
</feature>
<feature type="strand" evidence="4">
    <location>
        <begin position="367"/>
        <end position="375"/>
    </location>
</feature>
<feature type="strand" evidence="4">
    <location>
        <begin position="382"/>
        <end position="386"/>
    </location>
</feature>
<feature type="strand" evidence="4">
    <location>
        <begin position="389"/>
        <end position="392"/>
    </location>
</feature>
<feature type="helix" evidence="4">
    <location>
        <begin position="393"/>
        <end position="395"/>
    </location>
</feature>
<feature type="turn" evidence="4">
    <location>
        <begin position="399"/>
        <end position="401"/>
    </location>
</feature>
<feature type="strand" evidence="4">
    <location>
        <begin position="406"/>
        <end position="411"/>
    </location>
</feature>
<feature type="strand" evidence="4">
    <location>
        <begin position="414"/>
        <end position="419"/>
    </location>
</feature>
<feature type="helix" evidence="4">
    <location>
        <begin position="424"/>
        <end position="427"/>
    </location>
</feature>
<feature type="turn" evidence="4">
    <location>
        <begin position="428"/>
        <end position="430"/>
    </location>
</feature>
<feature type="helix" evidence="4">
    <location>
        <begin position="435"/>
        <end position="437"/>
    </location>
</feature>
<protein>
    <recommendedName>
        <fullName evidence="1">Diaminopimelate decarboxylase</fullName>
        <shortName evidence="1">DAP decarboxylase</shortName>
        <shortName evidence="1">DAPDC</shortName>
        <ecNumber evidence="1 2">4.1.1.20</ecNumber>
    </recommendedName>
</protein>
<reference key="1">
    <citation type="journal article" date="1996" name="Science">
        <title>Complete genome sequence of the methanogenic archaeon, Methanococcus jannaschii.</title>
        <authorList>
            <person name="Bult C.J."/>
            <person name="White O."/>
            <person name="Olsen G.J."/>
            <person name="Zhou L."/>
            <person name="Fleischmann R.D."/>
            <person name="Sutton G.G."/>
            <person name="Blake J.A."/>
            <person name="FitzGerald L.M."/>
            <person name="Clayton R.A."/>
            <person name="Gocayne J.D."/>
            <person name="Kerlavage A.R."/>
            <person name="Dougherty B.A."/>
            <person name="Tomb J.-F."/>
            <person name="Adams M.D."/>
            <person name="Reich C.I."/>
            <person name="Overbeek R."/>
            <person name="Kirkness E.F."/>
            <person name="Weinstock K.G."/>
            <person name="Merrick J.M."/>
            <person name="Glodek A."/>
            <person name="Scott J.L."/>
            <person name="Geoghagen N.S.M."/>
            <person name="Weidman J.F."/>
            <person name="Fuhrmann J.L."/>
            <person name="Nguyen D."/>
            <person name="Utterback T.R."/>
            <person name="Kelley J.M."/>
            <person name="Peterson J.D."/>
            <person name="Sadow P.W."/>
            <person name="Hanna M.C."/>
            <person name="Cotton M.D."/>
            <person name="Roberts K.M."/>
            <person name="Hurst M.A."/>
            <person name="Kaine B.P."/>
            <person name="Borodovsky M."/>
            <person name="Klenk H.-P."/>
            <person name="Fraser C.M."/>
            <person name="Smith H.O."/>
            <person name="Woese C.R."/>
            <person name="Venter J.C."/>
        </authorList>
    </citation>
    <scope>NUCLEOTIDE SEQUENCE [LARGE SCALE GENOMIC DNA]</scope>
    <source>
        <strain>ATCC 43067 / DSM 2661 / JAL-1 / JCM 10045 / NBRC 100440</strain>
    </source>
</reference>
<reference key="2">
    <citation type="journal article" date="2002" name="Structure">
        <title>Cocrystal structures of diaminopimelate decarboxylase: mechanism, evolution, and inhibition of an antibiotic resistance accessory factor.</title>
        <authorList>
            <person name="Ray S.S."/>
            <person name="Bonanno J.B."/>
            <person name="Rajashankar K.R."/>
            <person name="Pinho M.G."/>
            <person name="He G."/>
            <person name="De Lencastre H."/>
            <person name="Tomasz A."/>
            <person name="Burley S.K."/>
        </authorList>
    </citation>
    <scope>X-RAY CRYSTALLOGRAPHY (2.0 ANGSTROMS) OF 5-438 IN COMPLEXES WITH PLP; L-LYSINE AND SUBSTRATE ANALOG</scope>
    <scope>FUNCTION</scope>
    <scope>CATALYTIC ACTIVITY</scope>
    <scope>COFACTOR</scope>
    <scope>ACTIVITY REGULATION</scope>
    <scope>KINETIC PARAMETERS</scope>
    <scope>SUBUNIT</scope>
</reference>